<organism>
    <name type="scientific">Staphylococcus saprophyticus subsp. saprophyticus (strain ATCC 15305 / DSM 20229 / NCIMB 8711 / NCTC 7292 / S-41)</name>
    <dbReference type="NCBI Taxonomy" id="342451"/>
    <lineage>
        <taxon>Bacteria</taxon>
        <taxon>Bacillati</taxon>
        <taxon>Bacillota</taxon>
        <taxon>Bacilli</taxon>
        <taxon>Bacillales</taxon>
        <taxon>Staphylococcaceae</taxon>
        <taxon>Staphylococcus</taxon>
    </lineage>
</organism>
<reference key="1">
    <citation type="journal article" date="2005" name="Proc. Natl. Acad. Sci. U.S.A.">
        <title>Whole genome sequence of Staphylococcus saprophyticus reveals the pathogenesis of uncomplicated urinary tract infection.</title>
        <authorList>
            <person name="Kuroda M."/>
            <person name="Yamashita A."/>
            <person name="Hirakawa H."/>
            <person name="Kumano M."/>
            <person name="Morikawa K."/>
            <person name="Higashide M."/>
            <person name="Maruyama A."/>
            <person name="Inose Y."/>
            <person name="Matoba K."/>
            <person name="Toh H."/>
            <person name="Kuhara S."/>
            <person name="Hattori M."/>
            <person name="Ohta T."/>
        </authorList>
    </citation>
    <scope>NUCLEOTIDE SEQUENCE [LARGE SCALE GENOMIC DNA]</scope>
    <source>
        <strain>ATCC 15305 / DSM 20229 / NCIMB 8711 / NCTC 7292 / S-41</strain>
    </source>
</reference>
<sequence>MALTKEIIENTIQPHGGTLINREVNAELKETMLEVSHSMPAITLNPWSLSDLELIGIGGFSPLTGFMNEADYNEVVENLHLKNGLVWSIPITLPVTEDKANELEIGESIALYGEDNHLYGVLELEEKYTYDKEKEAAFVYGTTDIEHPGVLKVYEKGSVYLAGPIHLVDRPKHDEFVDYHLDPSETRQLFYDLNWKTVVGFQTRNPVHRAHEYIQKAALESVDGLLLNPLVGETKSDDIPAAVRMESYEVILKNYYPENRTRLVIYPAAMRYAGPREAILHATVRKNYGCTHFIVGRDHAGVGDYYGTYDAQTLIAQYEDELGIQILKFEHAFYCNVCENMATAKTCPHDASEHLHLSGTKVREKLKNGESLPKAFSRPEVADVLIKGLQEK</sequence>
<protein>
    <recommendedName>
        <fullName evidence="1">Sulfate adenylyltransferase</fullName>
        <ecNumber evidence="1">2.7.7.4</ecNumber>
    </recommendedName>
    <alternativeName>
        <fullName evidence="1">ATP-sulfurylase</fullName>
    </alternativeName>
    <alternativeName>
        <fullName evidence="1">Sulfate adenylate transferase</fullName>
        <shortName evidence="1">SAT</shortName>
    </alternativeName>
</protein>
<name>SAT_STAS1</name>
<dbReference type="EC" id="2.7.7.4" evidence="1"/>
<dbReference type="EMBL" id="AP008934">
    <property type="protein sequence ID" value="BAE19547.1"/>
    <property type="molecule type" value="Genomic_DNA"/>
</dbReference>
<dbReference type="RefSeq" id="WP_011303993.1">
    <property type="nucleotide sequence ID" value="NZ_MTGA01000035.1"/>
</dbReference>
<dbReference type="SMR" id="Q49UM4"/>
<dbReference type="GeneID" id="66868618"/>
<dbReference type="KEGG" id="ssp:SSP2402"/>
<dbReference type="PATRIC" id="fig|342451.11.peg.2387"/>
<dbReference type="eggNOG" id="COG2046">
    <property type="taxonomic scope" value="Bacteria"/>
</dbReference>
<dbReference type="HOGENOM" id="CLU_022950_1_1_9"/>
<dbReference type="OrthoDB" id="9804504at2"/>
<dbReference type="UniPathway" id="UPA00140">
    <property type="reaction ID" value="UER00204"/>
</dbReference>
<dbReference type="Proteomes" id="UP000006371">
    <property type="component" value="Chromosome"/>
</dbReference>
<dbReference type="GO" id="GO:0005524">
    <property type="term" value="F:ATP binding"/>
    <property type="evidence" value="ECO:0007669"/>
    <property type="project" value="UniProtKB-KW"/>
</dbReference>
<dbReference type="GO" id="GO:0004781">
    <property type="term" value="F:sulfate adenylyltransferase (ATP) activity"/>
    <property type="evidence" value="ECO:0007669"/>
    <property type="project" value="UniProtKB-UniRule"/>
</dbReference>
<dbReference type="GO" id="GO:0070814">
    <property type="term" value="P:hydrogen sulfide biosynthetic process"/>
    <property type="evidence" value="ECO:0007669"/>
    <property type="project" value="UniProtKB-UniRule"/>
</dbReference>
<dbReference type="GO" id="GO:0000103">
    <property type="term" value="P:sulfate assimilation"/>
    <property type="evidence" value="ECO:0007669"/>
    <property type="project" value="UniProtKB-UniRule"/>
</dbReference>
<dbReference type="CDD" id="cd00517">
    <property type="entry name" value="ATPS"/>
    <property type="match status" value="1"/>
</dbReference>
<dbReference type="Gene3D" id="3.40.50.620">
    <property type="entry name" value="HUPs"/>
    <property type="match status" value="1"/>
</dbReference>
<dbReference type="Gene3D" id="3.10.400.10">
    <property type="entry name" value="Sulfate adenylyltransferase"/>
    <property type="match status" value="1"/>
</dbReference>
<dbReference type="HAMAP" id="MF_00066">
    <property type="entry name" value="Sulf_adenylyltr"/>
    <property type="match status" value="1"/>
</dbReference>
<dbReference type="InterPro" id="IPR025980">
    <property type="entry name" value="ATP-Sase_PUA-like_dom"/>
</dbReference>
<dbReference type="InterPro" id="IPR015947">
    <property type="entry name" value="PUA-like_sf"/>
</dbReference>
<dbReference type="InterPro" id="IPR014729">
    <property type="entry name" value="Rossmann-like_a/b/a_fold"/>
</dbReference>
<dbReference type="InterPro" id="IPR020792">
    <property type="entry name" value="SO4_adenylyltransferase_pro"/>
</dbReference>
<dbReference type="InterPro" id="IPR024951">
    <property type="entry name" value="Sulfurylase_cat_dom"/>
</dbReference>
<dbReference type="InterPro" id="IPR002650">
    <property type="entry name" value="Sulphate_adenylyltransferase"/>
</dbReference>
<dbReference type="NCBIfam" id="NF003166">
    <property type="entry name" value="PRK04149.1"/>
    <property type="match status" value="1"/>
</dbReference>
<dbReference type="NCBIfam" id="TIGR00339">
    <property type="entry name" value="sopT"/>
    <property type="match status" value="1"/>
</dbReference>
<dbReference type="PANTHER" id="PTHR43509">
    <property type="match status" value="1"/>
</dbReference>
<dbReference type="PANTHER" id="PTHR43509:SF1">
    <property type="entry name" value="SULFATE ADENYLYLTRANSFERASE"/>
    <property type="match status" value="1"/>
</dbReference>
<dbReference type="Pfam" id="PF01747">
    <property type="entry name" value="ATP-sulfurylase"/>
    <property type="match status" value="1"/>
</dbReference>
<dbReference type="Pfam" id="PF14306">
    <property type="entry name" value="PUA_2"/>
    <property type="match status" value="1"/>
</dbReference>
<dbReference type="SUPFAM" id="SSF52374">
    <property type="entry name" value="Nucleotidylyl transferase"/>
    <property type="match status" value="1"/>
</dbReference>
<dbReference type="SUPFAM" id="SSF88697">
    <property type="entry name" value="PUA domain-like"/>
    <property type="match status" value="1"/>
</dbReference>
<keyword id="KW-0067">ATP-binding</keyword>
<keyword id="KW-0547">Nucleotide-binding</keyword>
<keyword id="KW-0548">Nucleotidyltransferase</keyword>
<keyword id="KW-1185">Reference proteome</keyword>
<keyword id="KW-0808">Transferase</keyword>
<gene>
    <name evidence="1" type="primary">sat</name>
    <name type="ordered locus">SSP2402</name>
</gene>
<feature type="chain" id="PRO_1000009045" description="Sulfate adenylyltransferase">
    <location>
        <begin position="1"/>
        <end position="392"/>
    </location>
</feature>
<comment type="catalytic activity">
    <reaction evidence="1">
        <text>sulfate + ATP + H(+) = adenosine 5'-phosphosulfate + diphosphate</text>
        <dbReference type="Rhea" id="RHEA:18133"/>
        <dbReference type="ChEBI" id="CHEBI:15378"/>
        <dbReference type="ChEBI" id="CHEBI:16189"/>
        <dbReference type="ChEBI" id="CHEBI:30616"/>
        <dbReference type="ChEBI" id="CHEBI:33019"/>
        <dbReference type="ChEBI" id="CHEBI:58243"/>
        <dbReference type="EC" id="2.7.7.4"/>
    </reaction>
</comment>
<comment type="pathway">
    <text evidence="1">Sulfur metabolism; hydrogen sulfide biosynthesis; sulfite from sulfate: step 1/3.</text>
</comment>
<comment type="similarity">
    <text evidence="1">Belongs to the sulfate adenylyltransferase family.</text>
</comment>
<proteinExistence type="inferred from homology"/>
<evidence type="ECO:0000255" key="1">
    <source>
        <dbReference type="HAMAP-Rule" id="MF_00066"/>
    </source>
</evidence>
<accession>Q49UM4</accession>